<evidence type="ECO:0000255" key="1">
    <source>
        <dbReference type="PROSITE-ProRule" id="PRU01221"/>
    </source>
</evidence>
<evidence type="ECO:0000256" key="2">
    <source>
        <dbReference type="SAM" id="MobiDB-lite"/>
    </source>
</evidence>
<evidence type="ECO:0000269" key="3">
    <source>
    </source>
</evidence>
<evidence type="ECO:0000269" key="4">
    <source>
    </source>
</evidence>
<evidence type="ECO:0000303" key="5">
    <source>
    </source>
</evidence>
<evidence type="ECO:0000305" key="6"/>
<evidence type="ECO:0000312" key="7">
    <source>
        <dbReference type="EMBL" id="AEW43899.1"/>
    </source>
</evidence>
<evidence type="ECO:0000312" key="8">
    <source>
        <dbReference type="FlyBase" id="FBgn0031857"/>
    </source>
</evidence>
<evidence type="ECO:0000312" key="9">
    <source>
        <dbReference type="Proteomes" id="UP000000803"/>
    </source>
</evidence>
<protein>
    <recommendedName>
        <fullName evidence="6">E3 ubiquitin-protein ligase lubel</fullName>
        <ecNumber evidence="3 4">2.3.2.31</ecNumber>
    </recommendedName>
    <alternativeName>
        <fullName evidence="5">Linear Ubiquitin E3 ligase</fullName>
    </alternativeName>
</protein>
<accession>Q8IPJ3</accession>
<accession>M9PB55</accession>
<accession>M9PCD7</accession>
<accession>M9PCS0</accession>
<accession>Q9VM88</accession>
<feature type="chain" id="PRO_0000448740" description="E3 ubiquitin-protein ligase lubel">
    <location>
        <begin position="1"/>
        <end position="2892"/>
    </location>
</feature>
<feature type="domain" description="UBA-like 1" evidence="3">
    <location>
        <begin position="1042"/>
        <end position="1187"/>
    </location>
</feature>
<feature type="domain" description="UBA-like 2" evidence="3">
    <location>
        <begin position="2457"/>
        <end position="2513"/>
    </location>
</feature>
<feature type="zinc finger region" description="RING-type 1" evidence="1">
    <location>
        <begin position="2514"/>
        <end position="2564"/>
    </location>
</feature>
<feature type="zinc finger region" description="IBR-type" evidence="1">
    <location>
        <begin position="2601"/>
        <end position="2660"/>
    </location>
</feature>
<feature type="zinc finger region" description="RING-type 2; atypical" evidence="1">
    <location>
        <begin position="2690"/>
        <end position="2720"/>
    </location>
</feature>
<feature type="region of interest" description="Disordered" evidence="2">
    <location>
        <begin position="23"/>
        <end position="55"/>
    </location>
</feature>
<feature type="region of interest" description="Disordered" evidence="2">
    <location>
        <begin position="125"/>
        <end position="252"/>
    </location>
</feature>
<feature type="region of interest" description="Disordered" evidence="2">
    <location>
        <begin position="395"/>
        <end position="423"/>
    </location>
</feature>
<feature type="region of interest" description="Disordered" evidence="2">
    <location>
        <begin position="483"/>
        <end position="631"/>
    </location>
</feature>
<feature type="region of interest" description="Disordered" evidence="2">
    <location>
        <begin position="644"/>
        <end position="672"/>
    </location>
</feature>
<feature type="region of interest" description="Disordered" evidence="2">
    <location>
        <begin position="685"/>
        <end position="737"/>
    </location>
</feature>
<feature type="region of interest" description="Disordered" evidence="2">
    <location>
        <begin position="757"/>
        <end position="865"/>
    </location>
</feature>
<feature type="region of interest" description="Disordered" evidence="2">
    <location>
        <begin position="949"/>
        <end position="975"/>
    </location>
</feature>
<feature type="region of interest" description="Disordered" evidence="2">
    <location>
        <begin position="1214"/>
        <end position="1252"/>
    </location>
</feature>
<feature type="region of interest" description="Disordered" evidence="2">
    <location>
        <begin position="1477"/>
        <end position="1520"/>
    </location>
</feature>
<feature type="region of interest" description="Disordered" evidence="2">
    <location>
        <begin position="1557"/>
        <end position="1653"/>
    </location>
</feature>
<feature type="region of interest" description="Disordered" evidence="2">
    <location>
        <begin position="1717"/>
        <end position="2019"/>
    </location>
</feature>
<feature type="region of interest" description="Disordered" evidence="2">
    <location>
        <begin position="2032"/>
        <end position="2082"/>
    </location>
</feature>
<feature type="region of interest" description="Disordered" evidence="2">
    <location>
        <begin position="2191"/>
        <end position="2316"/>
    </location>
</feature>
<feature type="region of interest" description="Disordered" evidence="2">
    <location>
        <begin position="2411"/>
        <end position="2431"/>
    </location>
</feature>
<feature type="region of interest" description="TRIAD supradomain" evidence="1">
    <location>
        <begin position="2510"/>
        <end position="2748"/>
    </location>
</feature>
<feature type="region of interest" description="Necessary for linear polyubiquitination and sufficent for inducing DptA in the intestine" evidence="4">
    <location>
        <begin position="2514"/>
        <end position="2892"/>
    </location>
</feature>
<feature type="compositionally biased region" description="Low complexity" evidence="2">
    <location>
        <begin position="40"/>
        <end position="52"/>
    </location>
</feature>
<feature type="compositionally biased region" description="Gly residues" evidence="2">
    <location>
        <begin position="189"/>
        <end position="198"/>
    </location>
</feature>
<feature type="compositionally biased region" description="Polar residues" evidence="2">
    <location>
        <begin position="206"/>
        <end position="215"/>
    </location>
</feature>
<feature type="compositionally biased region" description="Low complexity" evidence="2">
    <location>
        <begin position="402"/>
        <end position="412"/>
    </location>
</feature>
<feature type="compositionally biased region" description="Low complexity" evidence="2">
    <location>
        <begin position="483"/>
        <end position="503"/>
    </location>
</feature>
<feature type="compositionally biased region" description="Acidic residues" evidence="2">
    <location>
        <begin position="516"/>
        <end position="528"/>
    </location>
</feature>
<feature type="compositionally biased region" description="Polar residues" evidence="2">
    <location>
        <begin position="535"/>
        <end position="546"/>
    </location>
</feature>
<feature type="compositionally biased region" description="Basic residues" evidence="2">
    <location>
        <begin position="547"/>
        <end position="560"/>
    </location>
</feature>
<feature type="compositionally biased region" description="Polar residues" evidence="2">
    <location>
        <begin position="606"/>
        <end position="623"/>
    </location>
</feature>
<feature type="compositionally biased region" description="Basic and acidic residues" evidence="2">
    <location>
        <begin position="647"/>
        <end position="670"/>
    </location>
</feature>
<feature type="compositionally biased region" description="Polar residues" evidence="2">
    <location>
        <begin position="801"/>
        <end position="813"/>
    </location>
</feature>
<feature type="compositionally biased region" description="Low complexity" evidence="2">
    <location>
        <begin position="818"/>
        <end position="837"/>
    </location>
</feature>
<feature type="compositionally biased region" description="Low complexity" evidence="2">
    <location>
        <begin position="846"/>
        <end position="856"/>
    </location>
</feature>
<feature type="compositionally biased region" description="Polar residues" evidence="2">
    <location>
        <begin position="1241"/>
        <end position="1252"/>
    </location>
</feature>
<feature type="compositionally biased region" description="Basic and acidic residues" evidence="2">
    <location>
        <begin position="1510"/>
        <end position="1519"/>
    </location>
</feature>
<feature type="compositionally biased region" description="Polar residues" evidence="2">
    <location>
        <begin position="1560"/>
        <end position="1571"/>
    </location>
</feature>
<feature type="compositionally biased region" description="Basic residues" evidence="2">
    <location>
        <begin position="1576"/>
        <end position="1587"/>
    </location>
</feature>
<feature type="compositionally biased region" description="Polar residues" evidence="2">
    <location>
        <begin position="1595"/>
        <end position="1607"/>
    </location>
</feature>
<feature type="compositionally biased region" description="Basic and acidic residues" evidence="2">
    <location>
        <begin position="1608"/>
        <end position="1627"/>
    </location>
</feature>
<feature type="compositionally biased region" description="Polar residues" evidence="2">
    <location>
        <begin position="1630"/>
        <end position="1653"/>
    </location>
</feature>
<feature type="compositionally biased region" description="Polar residues" evidence="2">
    <location>
        <begin position="1717"/>
        <end position="1726"/>
    </location>
</feature>
<feature type="compositionally biased region" description="Polar residues" evidence="2">
    <location>
        <begin position="1764"/>
        <end position="1779"/>
    </location>
</feature>
<feature type="compositionally biased region" description="Low complexity" evidence="2">
    <location>
        <begin position="1822"/>
        <end position="1834"/>
    </location>
</feature>
<feature type="compositionally biased region" description="Polar residues" evidence="2">
    <location>
        <begin position="1859"/>
        <end position="1881"/>
    </location>
</feature>
<feature type="compositionally biased region" description="Acidic residues" evidence="2">
    <location>
        <begin position="1918"/>
        <end position="1927"/>
    </location>
</feature>
<feature type="compositionally biased region" description="Basic and acidic residues" evidence="2">
    <location>
        <begin position="1953"/>
        <end position="1963"/>
    </location>
</feature>
<feature type="compositionally biased region" description="Acidic residues" evidence="2">
    <location>
        <begin position="1964"/>
        <end position="1975"/>
    </location>
</feature>
<feature type="compositionally biased region" description="Acidic residues" evidence="2">
    <location>
        <begin position="2036"/>
        <end position="2079"/>
    </location>
</feature>
<feature type="compositionally biased region" description="Low complexity" evidence="2">
    <location>
        <begin position="2214"/>
        <end position="2230"/>
    </location>
</feature>
<feature type="compositionally biased region" description="Low complexity" evidence="2">
    <location>
        <begin position="2269"/>
        <end position="2291"/>
    </location>
</feature>
<feature type="compositionally biased region" description="Polar residues" evidence="2">
    <location>
        <begin position="2297"/>
        <end position="2308"/>
    </location>
</feature>
<feature type="compositionally biased region" description="Acidic residues" evidence="2">
    <location>
        <begin position="2411"/>
        <end position="2425"/>
    </location>
</feature>
<feature type="active site" evidence="1 3 4">
    <location>
        <position position="2704"/>
    </location>
</feature>
<feature type="binding site" evidence="1">
    <location>
        <position position="2514"/>
    </location>
    <ligand>
        <name>Zn(2+)</name>
        <dbReference type="ChEBI" id="CHEBI:29105"/>
        <label>1</label>
    </ligand>
</feature>
<feature type="binding site" evidence="1">
    <location>
        <position position="2517"/>
    </location>
    <ligand>
        <name>Zn(2+)</name>
        <dbReference type="ChEBI" id="CHEBI:29105"/>
        <label>1</label>
    </ligand>
</feature>
<feature type="binding site" evidence="1">
    <location>
        <position position="2537"/>
    </location>
    <ligand>
        <name>Zn(2+)</name>
        <dbReference type="ChEBI" id="CHEBI:29105"/>
        <label>1</label>
    </ligand>
</feature>
<feature type="binding site" evidence="1">
    <location>
        <position position="2540"/>
    </location>
    <ligand>
        <name>Zn(2+)</name>
        <dbReference type="ChEBI" id="CHEBI:29105"/>
        <label>1</label>
    </ligand>
</feature>
<feature type="binding site" evidence="1">
    <location>
        <position position="2618"/>
    </location>
    <ligand>
        <name>Zn(2+)</name>
        <dbReference type="ChEBI" id="CHEBI:29105"/>
        <label>2</label>
    </ligand>
</feature>
<feature type="binding site" evidence="1">
    <location>
        <position position="2621"/>
    </location>
    <ligand>
        <name>Zn(2+)</name>
        <dbReference type="ChEBI" id="CHEBI:29105"/>
        <label>2</label>
    </ligand>
</feature>
<feature type="binding site" evidence="1">
    <location>
        <position position="2636"/>
    </location>
    <ligand>
        <name>Zn(2+)</name>
        <dbReference type="ChEBI" id="CHEBI:29105"/>
        <label>2</label>
    </ligand>
</feature>
<feature type="binding site" evidence="1">
    <location>
        <position position="2639"/>
    </location>
    <ligand>
        <name>Zn(2+)</name>
        <dbReference type="ChEBI" id="CHEBI:29105"/>
        <label>2</label>
    </ligand>
</feature>
<feature type="binding site" evidence="1">
    <location>
        <position position="2644"/>
    </location>
    <ligand>
        <name>Zn(2+)</name>
        <dbReference type="ChEBI" id="CHEBI:29105"/>
        <label>3</label>
    </ligand>
</feature>
<feature type="binding site" evidence="1">
    <location>
        <position position="2647"/>
    </location>
    <ligand>
        <name>Zn(2+)</name>
        <dbReference type="ChEBI" id="CHEBI:29105"/>
        <label>3</label>
    </ligand>
</feature>
<feature type="binding site" evidence="1">
    <location>
        <position position="2655"/>
    </location>
    <ligand>
        <name>Zn(2+)</name>
        <dbReference type="ChEBI" id="CHEBI:29105"/>
        <label>3</label>
    </ligand>
</feature>
<feature type="binding site" evidence="1">
    <location>
        <position position="2660"/>
    </location>
    <ligand>
        <name>Zn(2+)</name>
        <dbReference type="ChEBI" id="CHEBI:29105"/>
        <label>3</label>
    </ligand>
</feature>
<feature type="binding site" evidence="1">
    <location>
        <position position="2690"/>
    </location>
    <ligand>
        <name>Zn(2+)</name>
        <dbReference type="ChEBI" id="CHEBI:29105"/>
        <label>4</label>
    </ligand>
</feature>
<feature type="binding site" evidence="1">
    <location>
        <position position="2693"/>
    </location>
    <ligand>
        <name>Zn(2+)</name>
        <dbReference type="ChEBI" id="CHEBI:29105"/>
        <label>4</label>
    </ligand>
</feature>
<feature type="binding site" evidence="1">
    <location>
        <position position="2709"/>
    </location>
    <ligand>
        <name>Zn(2+)</name>
        <dbReference type="ChEBI" id="CHEBI:29105"/>
        <label>4</label>
    </ligand>
</feature>
<feature type="binding site" evidence="1">
    <location>
        <position position="2712"/>
    </location>
    <ligand>
        <name>Zn(2+)</name>
        <dbReference type="ChEBI" id="CHEBI:29105"/>
        <label>4</label>
    </ligand>
</feature>
<feature type="splice variant" id="VSP_060442" description="In isoform G, isoform I and isoform J." evidence="6">
    <location>
        <begin position="286"/>
        <end position="338"/>
    </location>
</feature>
<feature type="splice variant" id="VSP_060443" description="In isoform J." evidence="6">
    <original>ESVENIWNTLDESIQ</original>
    <variation>GRIQKRISFFEGTKT</variation>
    <location>
        <begin position="873"/>
        <end position="887"/>
    </location>
</feature>
<feature type="splice variant" id="VSP_060444" description="In isoform J." evidence="6">
    <location>
        <begin position="888"/>
        <end position="2892"/>
    </location>
</feature>
<feature type="splice variant" id="VSP_060445" description="In isoform C and isoform I." evidence="6">
    <location>
        <begin position="1160"/>
        <end position="1200"/>
    </location>
</feature>
<feature type="mutagenesis site" description="Loss of catalytic activity. Abolishes formation of linear polyubiquitin chains, slight reduction in longevity and upon heat shock, adults display reduced induction of Hsp70 and thus a reduction in heat stress tolerance. No obvious effect on adult phenotype and no reduction in immunity to E.coli infection; when associated with S-2693." evidence="3">
    <original>C</original>
    <variation>S</variation>
    <location>
        <position position="2690"/>
    </location>
</feature>
<feature type="mutagenesis site" description="Loss of catalytic activity. Abolishes formation of linear polyubiquitin chains, slight reduction in longevity and upon heat shock, adults display reduced induction of Hsp70 and thus a reduction in heat stress tolerance. No obvious effect on adult phenotype and no reduction in immunity to E.coli infection; when associated with S-2690." evidence="3">
    <original>C</original>
    <variation>S</variation>
    <location>
        <position position="2693"/>
    </location>
</feature>
<feature type="mutagenesis site" description="Reduces formation of linear ubiquitin chains." evidence="3 4">
    <original>C</original>
    <variation>A</variation>
    <location>
        <position position="2704"/>
    </location>
</feature>
<feature type="mutagenesis site" description="Reduces formation of linear polyubiquitin chains, slight reduction in longevity and upon heat shock adults display reduced induction of Hsp70 and thus a reduction in heat stress tolerance. No obvious effect on adult phenotype and no reduction in immunity to E.coli infection." evidence="3">
    <location>
        <begin position="2719"/>
        <end position="2892"/>
    </location>
</feature>
<feature type="mutagenesis site" description="Reduces formation of linear polyubiquitin chains." evidence="3">
    <original>R</original>
    <variation>A</variation>
    <location>
        <position position="2754"/>
    </location>
</feature>
<feature type="mutagenesis site" description="Reduces formation of linear polyubiquitin chains." evidence="3">
    <original>D</original>
    <variation>A</variation>
    <location>
        <position position="2755"/>
    </location>
</feature>
<organism evidence="9">
    <name type="scientific">Drosophila melanogaster</name>
    <name type="common">Fruit fly</name>
    <dbReference type="NCBI Taxonomy" id="7227"/>
    <lineage>
        <taxon>Eukaryota</taxon>
        <taxon>Metazoa</taxon>
        <taxon>Ecdysozoa</taxon>
        <taxon>Arthropoda</taxon>
        <taxon>Hexapoda</taxon>
        <taxon>Insecta</taxon>
        <taxon>Pterygota</taxon>
        <taxon>Neoptera</taxon>
        <taxon>Endopterygota</taxon>
        <taxon>Diptera</taxon>
        <taxon>Brachycera</taxon>
        <taxon>Muscomorpha</taxon>
        <taxon>Ephydroidea</taxon>
        <taxon>Drosophilidae</taxon>
        <taxon>Drosophila</taxon>
        <taxon>Sophophora</taxon>
    </lineage>
</organism>
<gene>
    <name evidence="5 8" type="primary">LUBEL</name>
    <name evidence="8" type="ORF">CG11321</name>
</gene>
<comment type="function">
    <text evidence="3 4">E3 ubiquitin-protein ligase which conjugates linear 'Met-1'- and 'Lys-63'-linked polyubiquitin chains to substrates and plays a crucial role in the NF-kappa-B intestinal inflammatory response to oral infection and in the heat stress response (PubMed:27702987, PubMed:30026495). Preferentially interacts with 'Lys-63'-linked, and to a lesser extent 'Lys-48'-linked, polyubiquitin chains (PubMed:27702987). Upon oral infection with a Gram-negative bacterium E.carotovora subsp. carotovora 15, functions with the E2 ubiquitin-conjugating enzyme Ubc10 to mediate the conjugation of 'Lys-63'- and linear 'Met-1'-linked polyubiquitin chains to the substrate key which is essential for activation of the NF-kappa-B signaling cascade in the adult intestinal epithelium (PubMed:27702987, PubMed:30026495). It is not required for systemic immune response to septic infection with either E.carotovora subsp. carotovora 15 or Gram-positive M.luteus bacteria (PubMed:30026495). Function in controlling linear ubiquitination is also essential for regulating the heat stress response in adults. This function may require the E2 ubiquitin-conjugating enzymes Ubc10 or eff (PubMed:27702987).</text>
</comment>
<comment type="catalytic activity">
    <reaction evidence="3 4">
        <text>[E2 ubiquitin-conjugating enzyme]-S-ubiquitinyl-L-cysteine + [acceptor protein]-L-lysine = [E2 ubiquitin-conjugating enzyme]-L-cysteine + [acceptor protein]-N(6)-ubiquitinyl-L-lysine.</text>
        <dbReference type="EC" id="2.3.2.31"/>
    </reaction>
</comment>
<comment type="alternative products">
    <event type="alternative splicing"/>
    <isoform>
        <id>Q8IPJ3-1</id>
        <name evidence="8">E</name>
        <sequence type="displayed"/>
    </isoform>
    <isoform>
        <id>Q8IPJ3-2</id>
        <name evidence="8">C</name>
        <name evidence="8">F</name>
        <sequence type="described" ref="VSP_060445"/>
    </isoform>
    <isoform>
        <id>Q8IPJ3-3</id>
        <name evidence="8">G</name>
        <sequence type="described" ref="VSP_060442"/>
    </isoform>
    <isoform>
        <id>Q8IPJ3-4</id>
        <name evidence="8">I</name>
        <sequence type="described" ref="VSP_060442 VSP_060445"/>
    </isoform>
    <isoform>
        <id>Q8IPJ3-5</id>
        <name evidence="8">J</name>
        <sequence type="described" ref="VSP_060442 VSP_060443 VSP_060444"/>
    </isoform>
</comment>
<comment type="developmental stage">
    <text evidence="3">Strong expression in 10 to 14 hour embryos.</text>
</comment>
<comment type="domain">
    <text evidence="3">UBA-like 2 (UBA2), but not UBA-like 1 (UBA1), domain interacts with tetra or longer polyubiquitin chains, and di-ubiquitin chains linked via 'lys-63', and to a lesser extent 'lys-48'. However, neither of the UBA1 or UBA2 domains interact with linear 'Met-1'-linked polyubiquitin chains.</text>
</comment>
<comment type="disruption phenotype">
    <text evidence="3">RNAi-mediated knockdown results in reduced heat tolerance with adults displaying decreased survival upon heat shock. RNAi-mediated knockdown in the muscles results in only a slight decrease in survival upon heat shock, compared to whole-body knockdown.</text>
</comment>
<comment type="similarity">
    <text evidence="6">Belongs to the RBR family.</text>
</comment>
<proteinExistence type="evidence at protein level"/>
<reference evidence="9" key="1">
    <citation type="journal article" date="2000" name="Science">
        <title>The genome sequence of Drosophila melanogaster.</title>
        <authorList>
            <person name="Adams M.D."/>
            <person name="Celniker S.E."/>
            <person name="Holt R.A."/>
            <person name="Evans C.A."/>
            <person name="Gocayne J.D."/>
            <person name="Amanatides P.G."/>
            <person name="Scherer S.E."/>
            <person name="Li P.W."/>
            <person name="Hoskins R.A."/>
            <person name="Galle R.F."/>
            <person name="George R.A."/>
            <person name="Lewis S.E."/>
            <person name="Richards S."/>
            <person name="Ashburner M."/>
            <person name="Henderson S.N."/>
            <person name="Sutton G.G."/>
            <person name="Wortman J.R."/>
            <person name="Yandell M.D."/>
            <person name="Zhang Q."/>
            <person name="Chen L.X."/>
            <person name="Brandon R.C."/>
            <person name="Rogers Y.-H.C."/>
            <person name="Blazej R.G."/>
            <person name="Champe M."/>
            <person name="Pfeiffer B.D."/>
            <person name="Wan K.H."/>
            <person name="Doyle C."/>
            <person name="Baxter E.G."/>
            <person name="Helt G."/>
            <person name="Nelson C.R."/>
            <person name="Miklos G.L.G."/>
            <person name="Abril J.F."/>
            <person name="Agbayani A."/>
            <person name="An H.-J."/>
            <person name="Andrews-Pfannkoch C."/>
            <person name="Baldwin D."/>
            <person name="Ballew R.M."/>
            <person name="Basu A."/>
            <person name="Baxendale J."/>
            <person name="Bayraktaroglu L."/>
            <person name="Beasley E.M."/>
            <person name="Beeson K.Y."/>
            <person name="Benos P.V."/>
            <person name="Berman B.P."/>
            <person name="Bhandari D."/>
            <person name="Bolshakov S."/>
            <person name="Borkova D."/>
            <person name="Botchan M.R."/>
            <person name="Bouck J."/>
            <person name="Brokstein P."/>
            <person name="Brottier P."/>
            <person name="Burtis K.C."/>
            <person name="Busam D.A."/>
            <person name="Butler H."/>
            <person name="Cadieu E."/>
            <person name="Center A."/>
            <person name="Chandra I."/>
            <person name="Cherry J.M."/>
            <person name="Cawley S."/>
            <person name="Dahlke C."/>
            <person name="Davenport L.B."/>
            <person name="Davies P."/>
            <person name="de Pablos B."/>
            <person name="Delcher A."/>
            <person name="Deng Z."/>
            <person name="Mays A.D."/>
            <person name="Dew I."/>
            <person name="Dietz S.M."/>
            <person name="Dodson K."/>
            <person name="Doup L.E."/>
            <person name="Downes M."/>
            <person name="Dugan-Rocha S."/>
            <person name="Dunkov B.C."/>
            <person name="Dunn P."/>
            <person name="Durbin K.J."/>
            <person name="Evangelista C.C."/>
            <person name="Ferraz C."/>
            <person name="Ferriera S."/>
            <person name="Fleischmann W."/>
            <person name="Fosler C."/>
            <person name="Gabrielian A.E."/>
            <person name="Garg N.S."/>
            <person name="Gelbart W.M."/>
            <person name="Glasser K."/>
            <person name="Glodek A."/>
            <person name="Gong F."/>
            <person name="Gorrell J.H."/>
            <person name="Gu Z."/>
            <person name="Guan P."/>
            <person name="Harris M."/>
            <person name="Harris N.L."/>
            <person name="Harvey D.A."/>
            <person name="Heiman T.J."/>
            <person name="Hernandez J.R."/>
            <person name="Houck J."/>
            <person name="Hostin D."/>
            <person name="Houston K.A."/>
            <person name="Howland T.J."/>
            <person name="Wei M.-H."/>
            <person name="Ibegwam C."/>
            <person name="Jalali M."/>
            <person name="Kalush F."/>
            <person name="Karpen G.H."/>
            <person name="Ke Z."/>
            <person name="Kennison J.A."/>
            <person name="Ketchum K.A."/>
            <person name="Kimmel B.E."/>
            <person name="Kodira C.D."/>
            <person name="Kraft C.L."/>
            <person name="Kravitz S."/>
            <person name="Kulp D."/>
            <person name="Lai Z."/>
            <person name="Lasko P."/>
            <person name="Lei Y."/>
            <person name="Levitsky A.A."/>
            <person name="Li J.H."/>
            <person name="Li Z."/>
            <person name="Liang Y."/>
            <person name="Lin X."/>
            <person name="Liu X."/>
            <person name="Mattei B."/>
            <person name="McIntosh T.C."/>
            <person name="McLeod M.P."/>
            <person name="McPherson D."/>
            <person name="Merkulov G."/>
            <person name="Milshina N.V."/>
            <person name="Mobarry C."/>
            <person name="Morris J."/>
            <person name="Moshrefi A."/>
            <person name="Mount S.M."/>
            <person name="Moy M."/>
            <person name="Murphy B."/>
            <person name="Murphy L."/>
            <person name="Muzny D.M."/>
            <person name="Nelson D.L."/>
            <person name="Nelson D.R."/>
            <person name="Nelson K.A."/>
            <person name="Nixon K."/>
            <person name="Nusskern D.R."/>
            <person name="Pacleb J.M."/>
            <person name="Palazzolo M."/>
            <person name="Pittman G.S."/>
            <person name="Pan S."/>
            <person name="Pollard J."/>
            <person name="Puri V."/>
            <person name="Reese M.G."/>
            <person name="Reinert K."/>
            <person name="Remington K."/>
            <person name="Saunders R.D.C."/>
            <person name="Scheeler F."/>
            <person name="Shen H."/>
            <person name="Shue B.C."/>
            <person name="Siden-Kiamos I."/>
            <person name="Simpson M."/>
            <person name="Skupski M.P."/>
            <person name="Smith T.J."/>
            <person name="Spier E."/>
            <person name="Spradling A.C."/>
            <person name="Stapleton M."/>
            <person name="Strong R."/>
            <person name="Sun E."/>
            <person name="Svirskas R."/>
            <person name="Tector C."/>
            <person name="Turner R."/>
            <person name="Venter E."/>
            <person name="Wang A.H."/>
            <person name="Wang X."/>
            <person name="Wang Z.-Y."/>
            <person name="Wassarman D.A."/>
            <person name="Weinstock G.M."/>
            <person name="Weissenbach J."/>
            <person name="Williams S.M."/>
            <person name="Woodage T."/>
            <person name="Worley K.C."/>
            <person name="Wu D."/>
            <person name="Yang S."/>
            <person name="Yao Q.A."/>
            <person name="Ye J."/>
            <person name="Yeh R.-F."/>
            <person name="Zaveri J.S."/>
            <person name="Zhan M."/>
            <person name="Zhang G."/>
            <person name="Zhao Q."/>
            <person name="Zheng L."/>
            <person name="Zheng X.H."/>
            <person name="Zhong F.N."/>
            <person name="Zhong W."/>
            <person name="Zhou X."/>
            <person name="Zhu S.C."/>
            <person name="Zhu X."/>
            <person name="Smith H.O."/>
            <person name="Gibbs R.A."/>
            <person name="Myers E.W."/>
            <person name="Rubin G.M."/>
            <person name="Venter J.C."/>
        </authorList>
    </citation>
    <scope>NUCLEOTIDE SEQUENCE [LARGE SCALE GENOMIC DNA]</scope>
    <source>
        <strain>Berkeley</strain>
    </source>
</reference>
<reference evidence="9" key="2">
    <citation type="journal article" date="2002" name="Genome Biol.">
        <title>Annotation of the Drosophila melanogaster euchromatic genome: a systematic review.</title>
        <authorList>
            <person name="Misra S."/>
            <person name="Crosby M.A."/>
            <person name="Mungall C.J."/>
            <person name="Matthews B.B."/>
            <person name="Campbell K.S."/>
            <person name="Hradecky P."/>
            <person name="Huang Y."/>
            <person name="Kaminker J.S."/>
            <person name="Millburn G.H."/>
            <person name="Prochnik S.E."/>
            <person name="Smith C.D."/>
            <person name="Tupy J.L."/>
            <person name="Whitfield E.J."/>
            <person name="Bayraktaroglu L."/>
            <person name="Berman B.P."/>
            <person name="Bettencourt B.R."/>
            <person name="Celniker S.E."/>
            <person name="de Grey A.D.N.J."/>
            <person name="Drysdale R.A."/>
            <person name="Harris N.L."/>
            <person name="Richter J."/>
            <person name="Russo S."/>
            <person name="Schroeder A.J."/>
            <person name="Shu S.Q."/>
            <person name="Stapleton M."/>
            <person name="Yamada C."/>
            <person name="Ashburner M."/>
            <person name="Gelbart W.M."/>
            <person name="Rubin G.M."/>
            <person name="Lewis S.E."/>
        </authorList>
    </citation>
    <scope>GENOME REANNOTATION</scope>
    <source>
        <strain>Berkeley</strain>
    </source>
</reference>
<reference evidence="7" key="3">
    <citation type="submission" date="2011-12" db="EMBL/GenBank/DDBJ databases">
        <authorList>
            <person name="Carlson J."/>
            <person name="Booth B."/>
            <person name="Frise E."/>
            <person name="Park S."/>
            <person name="Wan K."/>
            <person name="Yu C."/>
            <person name="Celniker S."/>
        </authorList>
    </citation>
    <scope>NUCLEOTIDE SEQUENCE [LARGE SCALE MRNA] (ISOFORM C)</scope>
</reference>
<reference evidence="6" key="4">
    <citation type="journal article" date="2016" name="EMBO Rep.">
        <title>Linear ubiquitination by LUBEL has a role in Drosophila heat stress response.</title>
        <authorList>
            <person name="Asaoka T."/>
            <person name="Almagro J."/>
            <person name="Ehrhardt C."/>
            <person name="Tsai I."/>
            <person name="Schleiffer A."/>
            <person name="Deszcz L."/>
            <person name="Junttila S."/>
            <person name="Ringrose L."/>
            <person name="Mechtler K."/>
            <person name="Kavirayani A."/>
            <person name="Gyenesei A."/>
            <person name="Hofmann K."/>
            <person name="Duchek P."/>
            <person name="Rittinger K."/>
            <person name="Ikeda F."/>
        </authorList>
    </citation>
    <scope>FUNCTION</scope>
    <scope>CATALYTIC ACTIVITY</scope>
    <scope>DEVELOPMENTAL STAGE</scope>
    <scope>DOMAIN</scope>
    <scope>DISRUPTION PHENOTYPE</scope>
    <scope>ACTIVE SITE</scope>
    <scope>MUTAGENESIS OF CYS-2690; CYS-2693; CYS-2704; 2719-CYS--GLY-2892; ARG-2754 AND ASP-2755</scope>
</reference>
<reference evidence="6" key="5">
    <citation type="journal article" date="2019" name="Cell Death Differ.">
        <title>M1-linked ubiquitination by LUBEL is required for inflammatory responses to oral infection in Drosophila.</title>
        <authorList>
            <person name="Aalto A.L."/>
            <person name="Mohan A.K."/>
            <person name="Schwintzer L."/>
            <person name="Kupka S."/>
            <person name="Kietz C."/>
            <person name="Walczak H."/>
            <person name="Broemer M."/>
            <person name="Meinander A."/>
        </authorList>
    </citation>
    <scope>FUNCTION</scope>
    <scope>CATALYTIC ACTIVITY</scope>
    <scope>ACTIVE SITE</scope>
    <scope>MUTAGENESIS OF CYS-2704</scope>
</reference>
<dbReference type="EC" id="2.3.2.31" evidence="3 4"/>
<dbReference type="EMBL" id="AE014134">
    <property type="protein sequence ID" value="AAF52435.3"/>
    <property type="molecule type" value="Genomic_DNA"/>
</dbReference>
<dbReference type="EMBL" id="AE014134">
    <property type="protein sequence ID" value="AAN10598.2"/>
    <property type="molecule type" value="Genomic_DNA"/>
</dbReference>
<dbReference type="EMBL" id="AE014134">
    <property type="protein sequence ID" value="AGB92692.1"/>
    <property type="molecule type" value="Genomic_DNA"/>
</dbReference>
<dbReference type="EMBL" id="AE014134">
    <property type="protein sequence ID" value="AGB92693.1"/>
    <property type="molecule type" value="Genomic_DNA"/>
</dbReference>
<dbReference type="EMBL" id="AE014134">
    <property type="protein sequence ID" value="AGB92695.1"/>
    <property type="molecule type" value="Genomic_DNA"/>
</dbReference>
<dbReference type="EMBL" id="AE014134">
    <property type="protein sequence ID" value="AGB92696.1"/>
    <property type="molecule type" value="Genomic_DNA"/>
</dbReference>
<dbReference type="EMBL" id="BT132959">
    <property type="protein sequence ID" value="AEW43899.1"/>
    <property type="molecule type" value="mRNA"/>
</dbReference>
<dbReference type="RefSeq" id="NP_001260156.1">
    <molecule id="Q8IPJ3-5"/>
    <property type="nucleotide sequence ID" value="NM_001273227.1"/>
</dbReference>
<dbReference type="RefSeq" id="NP_001260157.1">
    <molecule id="Q8IPJ3-2"/>
    <property type="nucleotide sequence ID" value="NM_001273228.2"/>
</dbReference>
<dbReference type="RefSeq" id="NP_001260159.1">
    <molecule id="Q8IPJ3-3"/>
    <property type="nucleotide sequence ID" value="NM_001273230.2"/>
</dbReference>
<dbReference type="RefSeq" id="NP_001260160.1">
    <molecule id="Q8IPJ3-4"/>
    <property type="nucleotide sequence ID" value="NM_001273231.2"/>
</dbReference>
<dbReference type="RefSeq" id="NP_609072.2">
    <molecule id="Q8IPJ3-5"/>
    <property type="nucleotide sequence ID" value="NM_135228.4"/>
</dbReference>
<dbReference type="RefSeq" id="NP_723214.2">
    <molecule id="Q8IPJ3-1"/>
    <property type="nucleotide sequence ID" value="NM_164709.4"/>
</dbReference>
<dbReference type="SMR" id="Q8IPJ3"/>
<dbReference type="FunCoup" id="Q8IPJ3">
    <property type="interactions" value="11"/>
</dbReference>
<dbReference type="IntAct" id="Q8IPJ3">
    <property type="interactions" value="7"/>
</dbReference>
<dbReference type="STRING" id="7227.FBpp0303658"/>
<dbReference type="GlyGen" id="Q8IPJ3">
    <property type="glycosylation" value="12 sites"/>
</dbReference>
<dbReference type="PaxDb" id="7227-FBpp0303658"/>
<dbReference type="DNASU" id="33950"/>
<dbReference type="EnsemblMetazoa" id="FBtr0290295">
    <molecule id="Q8IPJ3-5"/>
    <property type="protein sequence ID" value="FBpp0288734"/>
    <property type="gene ID" value="FBgn0031857"/>
</dbReference>
<dbReference type="EnsemblMetazoa" id="FBtr0331216">
    <molecule id="Q8IPJ3-1"/>
    <property type="protein sequence ID" value="FBpp0303658"/>
    <property type="gene ID" value="FBgn0031857"/>
</dbReference>
<dbReference type="EnsemblMetazoa" id="FBtr0331217">
    <molecule id="Q8IPJ3-5"/>
    <property type="protein sequence ID" value="FBpp0303659"/>
    <property type="gene ID" value="FBgn0031857"/>
</dbReference>
<dbReference type="EnsemblMetazoa" id="FBtr0331218">
    <molecule id="Q8IPJ3-2"/>
    <property type="protein sequence ID" value="FBpp0303660"/>
    <property type="gene ID" value="FBgn0031857"/>
</dbReference>
<dbReference type="EnsemblMetazoa" id="FBtr0331220">
    <molecule id="Q8IPJ3-3"/>
    <property type="protein sequence ID" value="FBpp0303662"/>
    <property type="gene ID" value="FBgn0031857"/>
</dbReference>
<dbReference type="EnsemblMetazoa" id="FBtr0331221">
    <molecule id="Q8IPJ3-4"/>
    <property type="protein sequence ID" value="FBpp0303663"/>
    <property type="gene ID" value="FBgn0031857"/>
</dbReference>
<dbReference type="GeneID" id="33950"/>
<dbReference type="KEGG" id="dme:Dmel_CG11321"/>
<dbReference type="UCSC" id="CG11321-RB">
    <molecule id="Q8IPJ3-1"/>
    <property type="organism name" value="d. melanogaster"/>
</dbReference>
<dbReference type="UCSC" id="CG11321-RC">
    <property type="organism name" value="d. melanogaster"/>
</dbReference>
<dbReference type="AGR" id="FB:FBgn0031857"/>
<dbReference type="CTD" id="33950"/>
<dbReference type="FlyBase" id="FBgn0031857">
    <property type="gene designation" value="LUBEL"/>
</dbReference>
<dbReference type="VEuPathDB" id="VectorBase:FBgn0031857"/>
<dbReference type="eggNOG" id="KOG1812">
    <property type="taxonomic scope" value="Eukaryota"/>
</dbReference>
<dbReference type="GeneTree" id="ENSGT00530000064112"/>
<dbReference type="HOGENOM" id="CLU_000929_0_0_1"/>
<dbReference type="InParanoid" id="Q8IPJ3"/>
<dbReference type="OMA" id="GSAWLAN"/>
<dbReference type="OrthoDB" id="9978677at2759"/>
<dbReference type="SignaLink" id="Q8IPJ3"/>
<dbReference type="BioGRID-ORCS" id="33950">
    <property type="hits" value="0 hits in 1 CRISPR screen"/>
</dbReference>
<dbReference type="GenomeRNAi" id="33950"/>
<dbReference type="PRO" id="PR:Q8IPJ3"/>
<dbReference type="Proteomes" id="UP000000803">
    <property type="component" value="Chromosome 2L"/>
</dbReference>
<dbReference type="Bgee" id="FBgn0031857">
    <property type="expression patterns" value="Expressed in muscle cell in proboscis and 49 other cell types or tissues"/>
</dbReference>
<dbReference type="ExpressionAtlas" id="Q8IPJ3">
    <property type="expression patterns" value="baseline and differential"/>
</dbReference>
<dbReference type="GO" id="GO:0071797">
    <property type="term" value="C:LUBAC complex"/>
    <property type="evidence" value="ECO:0007669"/>
    <property type="project" value="InterPro"/>
</dbReference>
<dbReference type="GO" id="GO:0036435">
    <property type="term" value="F:K48-linked polyubiquitin modification-dependent protein binding"/>
    <property type="evidence" value="ECO:0000314"/>
    <property type="project" value="FlyBase"/>
</dbReference>
<dbReference type="GO" id="GO:0070530">
    <property type="term" value="F:K63-linked polyubiquitin modification-dependent protein binding"/>
    <property type="evidence" value="ECO:0000314"/>
    <property type="project" value="FlyBase"/>
</dbReference>
<dbReference type="GO" id="GO:1990450">
    <property type="term" value="F:linear polyubiquitin binding"/>
    <property type="evidence" value="ECO:0000314"/>
    <property type="project" value="FlyBase"/>
</dbReference>
<dbReference type="GO" id="GO:0061630">
    <property type="term" value="F:ubiquitin protein ligase activity"/>
    <property type="evidence" value="ECO:0000314"/>
    <property type="project" value="FlyBase"/>
</dbReference>
<dbReference type="GO" id="GO:0004842">
    <property type="term" value="F:ubiquitin-protein transferase activity"/>
    <property type="evidence" value="ECO:0000250"/>
    <property type="project" value="FlyBase"/>
</dbReference>
<dbReference type="GO" id="GO:0008270">
    <property type="term" value="F:zinc ion binding"/>
    <property type="evidence" value="ECO:0000255"/>
    <property type="project" value="FlyBase"/>
</dbReference>
<dbReference type="GO" id="GO:0050829">
    <property type="term" value="P:defense response to Gram-negative bacterium"/>
    <property type="evidence" value="ECO:0000315"/>
    <property type="project" value="FlyBase"/>
</dbReference>
<dbReference type="GO" id="GO:0010286">
    <property type="term" value="P:heat acclimation"/>
    <property type="evidence" value="ECO:0000315"/>
    <property type="project" value="FlyBase"/>
</dbReference>
<dbReference type="GO" id="GO:0002376">
    <property type="term" value="P:immune system process"/>
    <property type="evidence" value="ECO:0007669"/>
    <property type="project" value="UniProtKB-KW"/>
</dbReference>
<dbReference type="GO" id="GO:0061059">
    <property type="term" value="P:positive regulation of peptidoglycan recognition protein signaling pathway"/>
    <property type="evidence" value="ECO:0000314"/>
    <property type="project" value="FlyBase"/>
</dbReference>
<dbReference type="GO" id="GO:0097039">
    <property type="term" value="P:protein linear polyubiquitination"/>
    <property type="evidence" value="ECO:0000314"/>
    <property type="project" value="FlyBase"/>
</dbReference>
<dbReference type="GO" id="GO:0000209">
    <property type="term" value="P:protein polyubiquitination"/>
    <property type="evidence" value="ECO:0000250"/>
    <property type="project" value="FlyBase"/>
</dbReference>
<dbReference type="CDD" id="cd19815">
    <property type="entry name" value="Bbox1_HOIP"/>
    <property type="match status" value="1"/>
</dbReference>
<dbReference type="CDD" id="cd20337">
    <property type="entry name" value="BRcat_RBR_HOIP"/>
    <property type="match status" value="1"/>
</dbReference>
<dbReference type="CDD" id="cd16631">
    <property type="entry name" value="mRING-HC-C4C4_RBR_HOIP"/>
    <property type="match status" value="1"/>
</dbReference>
<dbReference type="CDD" id="cd20351">
    <property type="entry name" value="Rcat_RBR_HOIP"/>
    <property type="match status" value="1"/>
</dbReference>
<dbReference type="Gene3D" id="1.10.8.10">
    <property type="entry name" value="DNA helicase RuvA subunit, C-terminal domain"/>
    <property type="match status" value="1"/>
</dbReference>
<dbReference type="Gene3D" id="3.30.40.10">
    <property type="entry name" value="Zinc/RING finger domain, C3HC4 (zinc finger)"/>
    <property type="match status" value="1"/>
</dbReference>
<dbReference type="InterPro" id="IPR047543">
    <property type="entry name" value="Bbox1_RNF31-like"/>
</dbReference>
<dbReference type="InterPro" id="IPR047540">
    <property type="entry name" value="BRcat_RBR_RNF31-like"/>
</dbReference>
<dbReference type="InterPro" id="IPR002867">
    <property type="entry name" value="IBR_dom"/>
</dbReference>
<dbReference type="InterPro" id="IPR047542">
    <property type="entry name" value="Rcat_RBR_RNF31-like"/>
</dbReference>
<dbReference type="InterPro" id="IPR026254">
    <property type="entry name" value="RNF31-like"/>
</dbReference>
<dbReference type="InterPro" id="IPR032065">
    <property type="entry name" value="RNF31-UBA"/>
</dbReference>
<dbReference type="InterPro" id="IPR041031">
    <property type="entry name" value="RNF31_C"/>
</dbReference>
<dbReference type="InterPro" id="IPR047541">
    <property type="entry name" value="RNF31_RBR_mRING-HC-like"/>
</dbReference>
<dbReference type="InterPro" id="IPR044066">
    <property type="entry name" value="TRIAD_supradom"/>
</dbReference>
<dbReference type="InterPro" id="IPR001876">
    <property type="entry name" value="Znf_RanBP2"/>
</dbReference>
<dbReference type="InterPro" id="IPR001841">
    <property type="entry name" value="Znf_RING"/>
</dbReference>
<dbReference type="InterPro" id="IPR013083">
    <property type="entry name" value="Znf_RING/FYVE/PHD"/>
</dbReference>
<dbReference type="PANTHER" id="PTHR16004:SF2">
    <property type="entry name" value="E3 UBIQUITIN-PROTEIN LIGASE LUBEL"/>
    <property type="match status" value="1"/>
</dbReference>
<dbReference type="PANTHER" id="PTHR16004">
    <property type="entry name" value="RING FINGER PROTEIN 31-RELATED"/>
    <property type="match status" value="1"/>
</dbReference>
<dbReference type="Pfam" id="PF18091">
    <property type="entry name" value="E3_UbLigase_RBR"/>
    <property type="match status" value="1"/>
</dbReference>
<dbReference type="Pfam" id="PF01485">
    <property type="entry name" value="IBR"/>
    <property type="match status" value="1"/>
</dbReference>
<dbReference type="Pfam" id="PF22191">
    <property type="entry name" value="IBR_1"/>
    <property type="match status" value="1"/>
</dbReference>
<dbReference type="Pfam" id="PF16678">
    <property type="entry name" value="UBA_HOIP"/>
    <property type="match status" value="1"/>
</dbReference>
<dbReference type="SMART" id="SM00647">
    <property type="entry name" value="IBR"/>
    <property type="match status" value="2"/>
</dbReference>
<dbReference type="SMART" id="SM00184">
    <property type="entry name" value="RING"/>
    <property type="match status" value="2"/>
</dbReference>
<dbReference type="SMART" id="SM00547">
    <property type="entry name" value="ZnF_RBZ"/>
    <property type="match status" value="1"/>
</dbReference>
<dbReference type="SUPFAM" id="SSF57850">
    <property type="entry name" value="RING/U-box"/>
    <property type="match status" value="3"/>
</dbReference>
<dbReference type="PROSITE" id="PS51873">
    <property type="entry name" value="TRIAD"/>
    <property type="match status" value="1"/>
</dbReference>
<dbReference type="PROSITE" id="PS01358">
    <property type="entry name" value="ZF_RANBP2_1"/>
    <property type="match status" value="1"/>
</dbReference>
<dbReference type="PROSITE" id="PS50089">
    <property type="entry name" value="ZF_RING_2"/>
    <property type="match status" value="1"/>
</dbReference>
<sequence>MTTHQLLNKNVRTMPSWVMEANDRIGPKPPPTPPNGVAGGLPKAPALPPKAKSTPEPDYEIIEFSSQQYSNEPMKTTVIRTKTPDNKLKCTLCGSQNPWVTCAECAGQIFCASCDDMFHKHPKRKQHMRKAVEQGTPPIPPKAQAGGGAPPPVAPPRRSKRGLLTPFLGRKDQMLPPPSPTPSHKSLGGWRGSLGGGATPPVPPIATSSANQMNNRPLPDPPRSEGGGSSRSGTPKSVFDTIQRPPSVQLEKIKSKASATLDRMAILQQRYRQQKARQDLSANSEQHLSNEAGFEHWSNISPSPSHFRSGSMSSGLNSSHFDLSDDSQFHNSLLLQQRQAAGAQRRQMSTSVFNLNSNPRRPLSEAQNGGAWLANQRIQQAQSLAQLNCAGCQQSQQHPGWAQHPHQALPQHQHPDQWSQFGSQQQFNNSNLSLNVGPGYMSQQHHPHYPPPVFMTQRGMMPNVYPGAPGYPMMHPGVMGMPPSAASRAASRSRYAASPTPSRKSMSLRRKRNSYVDDELTDDEDSDQDDRRSLVSNRSGMTSASRSQHHQNHIQPRQRRLSSASQLIASDELDGDQVHHKMRNRRGSIAKSVQSEWLPERRENEGTLTRNKTATDSARTSRIYSDLESEGSGARALVQAKIQQKLQEADQHKSSKKAEPKRKPEMKDENTQAAAVVQKVVVPPAHEESASEYEEVVEEVTASESEAEAQTAPDPQEVPDEIGADDLGPPPSTPDHEWECEFCTFVNEPNIKICSICCKTPSKPPVQPNKAKKVEEKPQPPAEKSNNIKASSKTETKPVQKPTTKSQQPSQKSVAALSKTTHTNSTSSSKASPAVNSKTTSSIPIKTPSKSTLKTSSENESDNSLAKSLLHKESVENIWNTLDESIQAQAEQVLKKAQKVSTACGGTPPREIAAVEMGTSPPPQSISTQTYDALPFNTKQEEIIPVVPDRFTTPEPNKMERRPHYRSNSQLQQESERYRSANDLRYHDGFGLDPYSAGLVTKRPNFINELRMLQLQVSSPFDMPHETFGVKHEPARDPETEMHIILKELELYKFTVEELEAALKYCSPETHPIQWLRENWHKLVQTVQSLSTKYGQERGENTIGTVSQNEAREALRNSGGNVWQAVADCIQQRQQKYRKLAAKGNFLRDDIVNALTAHQGNVEQALVELNRTQLKPFLMRIWGSPNGVENESGVAIDTKSDIHDFLNTHALDCLQPPLAGQSPSPAQANPFDQPRTDESPVKSTYATPSPYQMEDSTLKNLEILIGNMEQNQAKQNQEVLRSIETMLDTFKGKPELEYETDPEIMRILTKSPISTMKPSGPAEDKSTDDVKNFVWQHIQEIVPNLVQQVEQELMEKPEEVAKIEAEQPKEPEPLLEPQPEPTPSVDPAVYIMEEVIKPNLREASIREEVQPSFIYATEIANFKLEFDRGTERWHEAEWESSDLTDAERIVYKCYMAPNEQPKEDVVDVAVESSVNSLPTAKAQEESAPEVPIEAQKIENTEVTQPETVNEELRQQEKLETPLVITSETISETVSQTANESDKQKSIENNLQIKQNVAEVQVQSDDQPSTSRDANRRAKRSQQSRKGRSREQSQKPTNRTKLPNNIDQKVNESKTAAKETEAVKDKDLSAAASNIQSDVTASDPKTSTPLKILSEGTNSNTLETMENVTSTDINDNVTIEVISNRSEEVPAIQDLGKTKDISEPTANPIEEITSIQNSTTISEQSEGPQEPEIPIEVSETTEALQVPREEASIEIVSPPNEEQTKSPTSQEVNIQDTSHIISLPITDVTPTPEIINIAPSTSSISKEQKQSPKRLSKIPVRTLSSSSLRSESRSSNRTPTANDEIEREETTSQGVPIGETVSSPKSEQLSDNQEVNLVSQETQSKKDTNIVEEPATQPLGLELEEHSPNATAVAVSPTDSDEVFEDAPEFSGSDGTRPHDETASDAELYSLDSDGQRAETKSPEDEVVILLDEESQMESSIAQSESNASLDSHSSESETSKVVLKEFVPSGDPAKQNLSELVEDTQRLIKQMRDEISMDEFESTDEDEYSDEYSDEYDEGEEEEWYDSEGEEEGDFDGEEGNTYNEHASYIEEASTGDEGTEIEDIMEEDEDLADDDEPLQSQIPLDIEPVISPALSVTPTNQETDTIAHTEVVSSTGTRLETELPNPAMESILPSQSVQEDIKVEAIPIQSAPPIADSETRPAEQPVELVLEIPSEVEPTPVEEPTALPITPAPPIVDSESRPVEPPVETVLEEPKKVTPSMKGKTANSGTASKGPSTSSSTKTNKSTVSKIPKPTNEPTNKSNSTPLNKKVPLRSKSFSAPMGISSVKRIQEVYLQKQSSSIATSRVPLKSSPVTKKSINDAISRFNSNQADGPSTSGAAAAAAAALLKPRSQPRIPKKKYHETCFSDDDYETSATEEEQEEPNLAEPQKAEQLKRKMSMPVFRAYPSVQEPVIEDPAILARKYVDQELVTNIAEAQIAATLVSMKFSEDVALWAARECSDLDQAIAMLQQECELCMNSYPMNQMVSMLKCLHKCCKQCAKSYFTVQITDRSINDCSCPFCKLPELSNEAQHEDEHLEYFSNLDIFLKSILDNDVHELFQRKLRDRSLLQDPNFKWCIQCSSGFFARPKQKRLICPDCGSVTCAQCRKPWERQHEGSSCEAYLEWKRENDPELQAQGVQEHLAQNGIDCPKCKFRYSLARGGCMHFTCTQCKFEFCYGCARPFMMGAKCTVSTYCAKLGLHAHHPRNCLFYLRDKIPLQLQFLLKEQNVKFDTEPMQIKDESSSSSKARAQARCPIPLQKETPQGLVDTVCNTEVPDKHAGMCRTHYVEYLAGKVAKAGIDPLPIFDLTDCVQELRRRGIALPERGPWDTDEIYKNMCSEVIKKHIPLKSA</sequence>
<name>LUBEL_DROME</name>
<keyword id="KW-0025">Alternative splicing</keyword>
<keyword id="KW-0391">Immunity</keyword>
<keyword id="KW-0479">Metal-binding</keyword>
<keyword id="KW-1185">Reference proteome</keyword>
<keyword id="KW-0677">Repeat</keyword>
<keyword id="KW-0346">Stress response</keyword>
<keyword id="KW-0808">Transferase</keyword>
<keyword id="KW-0833">Ubl conjugation pathway</keyword>
<keyword id="KW-0862">Zinc</keyword>
<keyword id="KW-0863">Zinc-finger</keyword>